<sequence length="169" mass="18885">MYTSGYANRSSSFPTTTHNAARAATENAAAGLVSEVVYHEDQPMMAQLLLLPLLRHLGQQSRWQLWLTPQQKLSREWVQSAGLPLTKVMQISQLAPPHTLESMIRALRTGNYSVVIGWLTEELTEEEHASLVEAANVGNAVGFIMRPVRAHALPRRQHSGLKIHSNLYH</sequence>
<organism>
    <name type="scientific">Salmonella arizonae (strain ATCC BAA-731 / CDC346-86 / RSK2980)</name>
    <dbReference type="NCBI Taxonomy" id="41514"/>
    <lineage>
        <taxon>Bacteria</taxon>
        <taxon>Pseudomonadati</taxon>
        <taxon>Pseudomonadota</taxon>
        <taxon>Gammaproteobacteria</taxon>
        <taxon>Enterobacterales</taxon>
        <taxon>Enterobacteriaceae</taxon>
        <taxon>Salmonella</taxon>
    </lineage>
</organism>
<keyword id="KW-0131">Cell cycle</keyword>
<keyword id="KW-0132">Cell division</keyword>
<keyword id="KW-0227">DNA damage</keyword>
<keyword id="KW-1185">Reference proteome</keyword>
<keyword id="KW-0717">Septation</keyword>
<keyword id="KW-0742">SOS response</keyword>
<accession>A9MHT1</accession>
<comment type="function">
    <text evidence="1">Component of the SOS system and an inhibitor of cell division. Accumulation of SulA causes rapid cessation of cell division and the appearance of long, non-septate filaments. In the presence of GTP, binds a polymerization-competent form of FtsZ in a 1:1 ratio, thus inhibiting FtsZ polymerization and therefore preventing it from participating in the assembly of the Z ring. This mechanism prevents the premature segregation of damaged DNA to daughter cells during cell division.</text>
</comment>
<comment type="subunit">
    <text evidence="1">Interacts with FtsZ.</text>
</comment>
<comment type="induction">
    <text evidence="1">By DNA damage, as part of the SOS response.</text>
</comment>
<comment type="PTM">
    <text evidence="1">Is rapidly cleaved and degraded by the Lon protease once DNA damage is repaired.</text>
</comment>
<comment type="similarity">
    <text evidence="1">Belongs to the SulA family.</text>
</comment>
<dbReference type="EMBL" id="CP000880">
    <property type="protein sequence ID" value="ABX21821.1"/>
    <property type="molecule type" value="Genomic_DNA"/>
</dbReference>
<dbReference type="SMR" id="A9MHT1"/>
<dbReference type="STRING" id="41514.SARI_01939"/>
<dbReference type="KEGG" id="ses:SARI_01939"/>
<dbReference type="HOGENOM" id="CLU_118972_1_0_6"/>
<dbReference type="Proteomes" id="UP000002084">
    <property type="component" value="Chromosome"/>
</dbReference>
<dbReference type="GO" id="GO:0000917">
    <property type="term" value="P:division septum assembly"/>
    <property type="evidence" value="ECO:0007669"/>
    <property type="project" value="UniProtKB-KW"/>
</dbReference>
<dbReference type="GO" id="GO:0006281">
    <property type="term" value="P:DNA repair"/>
    <property type="evidence" value="ECO:0007669"/>
    <property type="project" value="TreeGrafter"/>
</dbReference>
<dbReference type="GO" id="GO:0051782">
    <property type="term" value="P:negative regulation of cell division"/>
    <property type="evidence" value="ECO:0007669"/>
    <property type="project" value="UniProtKB-UniRule"/>
</dbReference>
<dbReference type="GO" id="GO:0009432">
    <property type="term" value="P:SOS response"/>
    <property type="evidence" value="ECO:0007669"/>
    <property type="project" value="UniProtKB-UniRule"/>
</dbReference>
<dbReference type="FunFam" id="3.40.50.300:FF:000417">
    <property type="entry name" value="Cell division inhibitor SulA"/>
    <property type="match status" value="1"/>
</dbReference>
<dbReference type="Gene3D" id="3.40.50.300">
    <property type="entry name" value="P-loop containing nucleotide triphosphate hydrolases"/>
    <property type="match status" value="1"/>
</dbReference>
<dbReference type="HAMAP" id="MF_01179">
    <property type="entry name" value="SulA"/>
    <property type="match status" value="1"/>
</dbReference>
<dbReference type="InterPro" id="IPR004596">
    <property type="entry name" value="Cell_div_suppressor_SulA"/>
</dbReference>
<dbReference type="InterPro" id="IPR027417">
    <property type="entry name" value="P-loop_NTPase"/>
</dbReference>
<dbReference type="InterPro" id="IPR050356">
    <property type="entry name" value="SulA_CellDiv_inhibitor"/>
</dbReference>
<dbReference type="InterPro" id="IPR047696">
    <property type="entry name" value="SulA_enterobact"/>
</dbReference>
<dbReference type="NCBIfam" id="NF007892">
    <property type="entry name" value="PRK10595.1"/>
    <property type="match status" value="1"/>
</dbReference>
<dbReference type="NCBIfam" id="TIGR00623">
    <property type="entry name" value="SOS_SulA_coli"/>
    <property type="match status" value="1"/>
</dbReference>
<dbReference type="PANTHER" id="PTHR35369">
    <property type="entry name" value="BLR3025 PROTEIN-RELATED"/>
    <property type="match status" value="1"/>
</dbReference>
<dbReference type="PANTHER" id="PTHR35369:SF4">
    <property type="entry name" value="CELL DIVISION INHIBITOR SULA"/>
    <property type="match status" value="1"/>
</dbReference>
<dbReference type="Pfam" id="PF03846">
    <property type="entry name" value="SulA"/>
    <property type="match status" value="1"/>
</dbReference>
<dbReference type="PIRSF" id="PIRSF003093">
    <property type="entry name" value="SulA"/>
    <property type="match status" value="1"/>
</dbReference>
<dbReference type="SUPFAM" id="SSF52540">
    <property type="entry name" value="P-loop containing nucleoside triphosphate hydrolases"/>
    <property type="match status" value="1"/>
</dbReference>
<protein>
    <recommendedName>
        <fullName evidence="1">Cell division inhibitor SulA</fullName>
    </recommendedName>
</protein>
<evidence type="ECO:0000255" key="1">
    <source>
        <dbReference type="HAMAP-Rule" id="MF_01179"/>
    </source>
</evidence>
<proteinExistence type="inferred from homology"/>
<name>SULA_SALAR</name>
<reference key="1">
    <citation type="submission" date="2007-11" db="EMBL/GenBank/DDBJ databases">
        <authorList>
            <consortium name="The Salmonella enterica serovar Arizonae Genome Sequencing Project"/>
            <person name="McClelland M."/>
            <person name="Sanderson E.K."/>
            <person name="Porwollik S."/>
            <person name="Spieth J."/>
            <person name="Clifton W.S."/>
            <person name="Fulton R."/>
            <person name="Chunyan W."/>
            <person name="Wollam A."/>
            <person name="Shah N."/>
            <person name="Pepin K."/>
            <person name="Bhonagiri V."/>
            <person name="Nash W."/>
            <person name="Johnson M."/>
            <person name="Thiruvilangam P."/>
            <person name="Wilson R."/>
        </authorList>
    </citation>
    <scope>NUCLEOTIDE SEQUENCE [LARGE SCALE GENOMIC DNA]</scope>
    <source>
        <strain>ATCC BAA-731 / CDC346-86 / RSK2980</strain>
    </source>
</reference>
<feature type="chain" id="PRO_0000343970" description="Cell division inhibitor SulA">
    <location>
        <begin position="1"/>
        <end position="169"/>
    </location>
</feature>
<feature type="region of interest" description="FtsZ binding" evidence="1">
    <location>
        <begin position="106"/>
        <end position="112"/>
    </location>
</feature>
<feature type="region of interest" description="Lon protease binding" evidence="1">
    <location>
        <begin position="162"/>
        <end position="169"/>
    </location>
</feature>
<feature type="site" description="Essential for degradation by Lon protease" evidence="1">
    <location>
        <position position="169"/>
    </location>
</feature>
<gene>
    <name evidence="1" type="primary">sulA</name>
    <name type="ordered locus">SARI_01939</name>
</gene>